<keyword id="KW-0067">ATP-binding</keyword>
<keyword id="KW-0342">GTP-binding</keyword>
<keyword id="KW-0547">Nucleotide-binding</keyword>
<keyword id="KW-1185">Reference proteome</keyword>
<accession>Q8EAE2</accession>
<feature type="chain" id="PRO_0000107753" description="Nucleotide-binding protein SO_3964">
    <location>
        <begin position="1"/>
        <end position="284"/>
    </location>
</feature>
<feature type="binding site" evidence="1">
    <location>
        <begin position="8"/>
        <end position="15"/>
    </location>
    <ligand>
        <name>ATP</name>
        <dbReference type="ChEBI" id="CHEBI:30616"/>
    </ligand>
</feature>
<feature type="binding site" evidence="1">
    <location>
        <begin position="56"/>
        <end position="59"/>
    </location>
    <ligand>
        <name>GTP</name>
        <dbReference type="ChEBI" id="CHEBI:37565"/>
    </ligand>
</feature>
<organism>
    <name type="scientific">Shewanella oneidensis (strain ATCC 700550 / JCM 31522 / CIP 106686 / LMG 19005 / NCIMB 14063 / MR-1)</name>
    <dbReference type="NCBI Taxonomy" id="211586"/>
    <lineage>
        <taxon>Bacteria</taxon>
        <taxon>Pseudomonadati</taxon>
        <taxon>Pseudomonadota</taxon>
        <taxon>Gammaproteobacteria</taxon>
        <taxon>Alteromonadales</taxon>
        <taxon>Shewanellaceae</taxon>
        <taxon>Shewanella</taxon>
    </lineage>
</organism>
<proteinExistence type="inferred from homology"/>
<evidence type="ECO:0000255" key="1">
    <source>
        <dbReference type="HAMAP-Rule" id="MF_00636"/>
    </source>
</evidence>
<reference key="1">
    <citation type="journal article" date="2002" name="Nat. Biotechnol.">
        <title>Genome sequence of the dissimilatory metal ion-reducing bacterium Shewanella oneidensis.</title>
        <authorList>
            <person name="Heidelberg J.F."/>
            <person name="Paulsen I.T."/>
            <person name="Nelson K.E."/>
            <person name="Gaidos E.J."/>
            <person name="Nelson W.C."/>
            <person name="Read T.D."/>
            <person name="Eisen J.A."/>
            <person name="Seshadri R."/>
            <person name="Ward N.L."/>
            <person name="Methe B.A."/>
            <person name="Clayton R.A."/>
            <person name="Meyer T."/>
            <person name="Tsapin A."/>
            <person name="Scott J."/>
            <person name="Beanan M.J."/>
            <person name="Brinkac L.M."/>
            <person name="Daugherty S.C."/>
            <person name="DeBoy R.T."/>
            <person name="Dodson R.J."/>
            <person name="Durkin A.S."/>
            <person name="Haft D.H."/>
            <person name="Kolonay J.F."/>
            <person name="Madupu R."/>
            <person name="Peterson J.D."/>
            <person name="Umayam L.A."/>
            <person name="White O."/>
            <person name="Wolf A.M."/>
            <person name="Vamathevan J.J."/>
            <person name="Weidman J.F."/>
            <person name="Impraim M."/>
            <person name="Lee K."/>
            <person name="Berry K.J."/>
            <person name="Lee C."/>
            <person name="Mueller J."/>
            <person name="Khouri H.M."/>
            <person name="Gill J."/>
            <person name="Utterback T.R."/>
            <person name="McDonald L.A."/>
            <person name="Feldblyum T.V."/>
            <person name="Smith H.O."/>
            <person name="Venter J.C."/>
            <person name="Nealson K.H."/>
            <person name="Fraser C.M."/>
        </authorList>
    </citation>
    <scope>NUCLEOTIDE SEQUENCE [LARGE SCALE GENOMIC DNA]</scope>
    <source>
        <strain>ATCC 700550 / JCM 31522 / CIP 106686 / LMG 19005 / NCIMB 14063 / MR-1</strain>
    </source>
</reference>
<dbReference type="EMBL" id="AE014299">
    <property type="protein sequence ID" value="AAN56938.1"/>
    <property type="molecule type" value="Genomic_DNA"/>
</dbReference>
<dbReference type="RefSeq" id="NP_719494.1">
    <property type="nucleotide sequence ID" value="NC_004347.2"/>
</dbReference>
<dbReference type="SMR" id="Q8EAE2"/>
<dbReference type="STRING" id="211586.SO_3964"/>
<dbReference type="PaxDb" id="211586-SO_3964"/>
<dbReference type="KEGG" id="son:SO_3964"/>
<dbReference type="PATRIC" id="fig|211586.12.peg.3848"/>
<dbReference type="eggNOG" id="COG1660">
    <property type="taxonomic scope" value="Bacteria"/>
</dbReference>
<dbReference type="HOGENOM" id="CLU_059558_1_1_6"/>
<dbReference type="OrthoDB" id="9784461at2"/>
<dbReference type="PhylomeDB" id="Q8EAE2"/>
<dbReference type="BioCyc" id="SONE211586:G1GMP-3679-MONOMER"/>
<dbReference type="Proteomes" id="UP000008186">
    <property type="component" value="Chromosome"/>
</dbReference>
<dbReference type="GO" id="GO:0005524">
    <property type="term" value="F:ATP binding"/>
    <property type="evidence" value="ECO:0007669"/>
    <property type="project" value="UniProtKB-UniRule"/>
</dbReference>
<dbReference type="GO" id="GO:0005525">
    <property type="term" value="F:GTP binding"/>
    <property type="evidence" value="ECO:0007669"/>
    <property type="project" value="UniProtKB-UniRule"/>
</dbReference>
<dbReference type="GO" id="GO:0060090">
    <property type="term" value="F:molecular adaptor activity"/>
    <property type="evidence" value="ECO:0000318"/>
    <property type="project" value="GO_Central"/>
</dbReference>
<dbReference type="HAMAP" id="MF_00636">
    <property type="entry name" value="RapZ_like"/>
    <property type="match status" value="1"/>
</dbReference>
<dbReference type="InterPro" id="IPR027417">
    <property type="entry name" value="P-loop_NTPase"/>
</dbReference>
<dbReference type="InterPro" id="IPR005337">
    <property type="entry name" value="RapZ-like"/>
</dbReference>
<dbReference type="InterPro" id="IPR053930">
    <property type="entry name" value="RapZ-like_N"/>
</dbReference>
<dbReference type="InterPro" id="IPR053931">
    <property type="entry name" value="RapZ_C"/>
</dbReference>
<dbReference type="NCBIfam" id="NF003828">
    <property type="entry name" value="PRK05416.1"/>
    <property type="match status" value="1"/>
</dbReference>
<dbReference type="PANTHER" id="PTHR30448">
    <property type="entry name" value="RNASE ADAPTER PROTEIN RAPZ"/>
    <property type="match status" value="1"/>
</dbReference>
<dbReference type="PANTHER" id="PTHR30448:SF0">
    <property type="entry name" value="RNASE ADAPTER PROTEIN RAPZ"/>
    <property type="match status" value="1"/>
</dbReference>
<dbReference type="Pfam" id="PF22740">
    <property type="entry name" value="PapZ_C"/>
    <property type="match status" value="1"/>
</dbReference>
<dbReference type="Pfam" id="PF03668">
    <property type="entry name" value="RapZ-like_N"/>
    <property type="match status" value="1"/>
</dbReference>
<dbReference type="PIRSF" id="PIRSF005052">
    <property type="entry name" value="P-loopkin"/>
    <property type="match status" value="1"/>
</dbReference>
<dbReference type="SUPFAM" id="SSF52540">
    <property type="entry name" value="P-loop containing nucleoside triphosphate hydrolases"/>
    <property type="match status" value="1"/>
</dbReference>
<name>Y3964_SHEON</name>
<protein>
    <recommendedName>
        <fullName evidence="1">Nucleotide-binding protein SO_3964</fullName>
    </recommendedName>
</protein>
<gene>
    <name type="ordered locus">SO_3964</name>
</gene>
<sequence>MKLVIVSGRSGSGKSVALRVLEDLGYYCVDNLPLPLIGSLLEQLKGSNDLVAISVDVRNLPEQDKVLVKQLASLPEGTELTSFFLNSSDKVLLKRYSETRRLHPLSKSRVSLQEAIKLEGKLLEPLSQQMDHYIDTSNLNIYELSDQVRQILLGSVDKELVINFESFGFKHGMPTEADFMFDVRFLPNPHWEPELRPLTGLDEPVAEFLNRQPLVNKFIWQIENLLETWLPHLERNNRSYLTIAIGCTGGQHRSVYVAEQLAKRFSNGKHKVNARHRELSHAKA</sequence>
<comment type="function">
    <text evidence="1">Displays ATPase and GTPase activities.</text>
</comment>
<comment type="similarity">
    <text evidence="1">Belongs to the RapZ-like family.</text>
</comment>